<organism>
    <name type="scientific">Rattus norvegicus</name>
    <name type="common">Rat</name>
    <dbReference type="NCBI Taxonomy" id="10116"/>
    <lineage>
        <taxon>Eukaryota</taxon>
        <taxon>Metazoa</taxon>
        <taxon>Chordata</taxon>
        <taxon>Craniata</taxon>
        <taxon>Vertebrata</taxon>
        <taxon>Euteleostomi</taxon>
        <taxon>Mammalia</taxon>
        <taxon>Eutheria</taxon>
        <taxon>Euarchontoglires</taxon>
        <taxon>Glires</taxon>
        <taxon>Rodentia</taxon>
        <taxon>Myomorpha</taxon>
        <taxon>Muroidea</taxon>
        <taxon>Muridae</taxon>
        <taxon>Murinae</taxon>
        <taxon>Rattus</taxon>
    </lineage>
</organism>
<accession>Q9Z2Q3</accession>
<sequence length="473" mass="53999">MRAGLGPIITLALVLEVAWASELKPTAPPIFTGRPFVVAWNVPTQECAPRHKVPLDLRAFDVEATPNEGFFNQNITTFYYDRLGLYPRFDAAGMSVHGGVPQNGSLCAHLPMLKEAVERYIQTQEPAGLAVIDWEEWRPVWVRNWQEKDVYRQSSRQLVASRHPDWPSDRIVKQAQYEFEFAARQFMLNTLRYVKAVRPQHLWGFYLFPDCYNHDYVQNWDSYTGRCPDVEVAQNDQLAWLWAENTALFPSVYLDKTLASSKHSRNFVSFRVQEALRVAHTHHANHALPVYVFTRPTYTRRLTELNQMDLISTIGESAALGSAGVIFWGDSVYASSMENCQNLKKYLTQTLVPYIVNVSWATQYCSWTQCHGHGRCVRRNPSASTFLHLSPSSFRLVPGRTPSEPQLRPEGELSEDDLSYLQMHFRCHCYLGWGGEQCQWNHKRAAGDASRAWAGAHLASLLGLVAMTLTWTL</sequence>
<dbReference type="EC" id="3.2.1.35"/>
<dbReference type="EMBL" id="AF034218">
    <property type="protein sequence ID" value="AAD01980.1"/>
    <property type="molecule type" value="mRNA"/>
</dbReference>
<dbReference type="SMR" id="Q9Z2Q3"/>
<dbReference type="FunCoup" id="Q9Z2Q3">
    <property type="interactions" value="462"/>
</dbReference>
<dbReference type="STRING" id="10116.ENSRNOP00000075204"/>
<dbReference type="CAZy" id="GH56">
    <property type="family name" value="Glycoside Hydrolase Family 56"/>
</dbReference>
<dbReference type="GlyCosmos" id="Q9Z2Q3">
    <property type="glycosylation" value="3 sites, No reported glycans"/>
</dbReference>
<dbReference type="GlyGen" id="Q9Z2Q3">
    <property type="glycosylation" value="3 sites"/>
</dbReference>
<dbReference type="PhosphoSitePlus" id="Q9Z2Q3"/>
<dbReference type="PaxDb" id="10116-ENSRNOP00000017461"/>
<dbReference type="UCSC" id="RGD:620321">
    <property type="organism name" value="rat"/>
</dbReference>
<dbReference type="AGR" id="RGD:620321"/>
<dbReference type="RGD" id="620321">
    <property type="gene designation" value="Hyal2"/>
</dbReference>
<dbReference type="eggNOG" id="ENOG502QUYI">
    <property type="taxonomic scope" value="Eukaryota"/>
</dbReference>
<dbReference type="InParanoid" id="Q9Z2Q3"/>
<dbReference type="PhylomeDB" id="Q9Z2Q3"/>
<dbReference type="BRENDA" id="3.2.1.35">
    <property type="organism ID" value="5301"/>
</dbReference>
<dbReference type="Reactome" id="R-RNO-2160916">
    <property type="pathway name" value="Hyaluronan uptake and degradation"/>
</dbReference>
<dbReference type="PRO" id="PR:Q9Z2Q3"/>
<dbReference type="Proteomes" id="UP000002494">
    <property type="component" value="Unplaced"/>
</dbReference>
<dbReference type="GO" id="GO:0016324">
    <property type="term" value="C:apical plasma membrane"/>
    <property type="evidence" value="ECO:0000250"/>
    <property type="project" value="UniProtKB"/>
</dbReference>
<dbReference type="GO" id="GO:0009986">
    <property type="term" value="C:cell surface"/>
    <property type="evidence" value="ECO:0000266"/>
    <property type="project" value="RGD"/>
</dbReference>
<dbReference type="GO" id="GO:0005737">
    <property type="term" value="C:cytoplasm"/>
    <property type="evidence" value="ECO:0000266"/>
    <property type="project" value="RGD"/>
</dbReference>
<dbReference type="GO" id="GO:0031410">
    <property type="term" value="C:cytoplasmic vesicle"/>
    <property type="evidence" value="ECO:0000250"/>
    <property type="project" value="UniProtKB"/>
</dbReference>
<dbReference type="GO" id="GO:0005829">
    <property type="term" value="C:cytosol"/>
    <property type="evidence" value="ECO:0000250"/>
    <property type="project" value="UniProtKB"/>
</dbReference>
<dbReference type="GO" id="GO:0030139">
    <property type="term" value="C:endocytic vesicle"/>
    <property type="evidence" value="ECO:0000250"/>
    <property type="project" value="UniProtKB"/>
</dbReference>
<dbReference type="GO" id="GO:0009897">
    <property type="term" value="C:external side of plasma membrane"/>
    <property type="evidence" value="ECO:0000266"/>
    <property type="project" value="RGD"/>
</dbReference>
<dbReference type="GO" id="GO:0000139">
    <property type="term" value="C:Golgi membrane"/>
    <property type="evidence" value="ECO:0000314"/>
    <property type="project" value="UniProtKB"/>
</dbReference>
<dbReference type="GO" id="GO:0005764">
    <property type="term" value="C:lysosome"/>
    <property type="evidence" value="ECO:0000250"/>
    <property type="project" value="UniProtKB"/>
</dbReference>
<dbReference type="GO" id="GO:0045121">
    <property type="term" value="C:membrane raft"/>
    <property type="evidence" value="ECO:0000314"/>
    <property type="project" value="UniProtKB"/>
</dbReference>
<dbReference type="GO" id="GO:0005902">
    <property type="term" value="C:microvillus"/>
    <property type="evidence" value="ECO:0000250"/>
    <property type="project" value="UniProtKB"/>
</dbReference>
<dbReference type="GO" id="GO:0048471">
    <property type="term" value="C:perinuclear region of cytoplasm"/>
    <property type="evidence" value="ECO:0000250"/>
    <property type="project" value="UniProtKB"/>
</dbReference>
<dbReference type="GO" id="GO:0005886">
    <property type="term" value="C:plasma membrane"/>
    <property type="evidence" value="ECO:0000314"/>
    <property type="project" value="UniProtKB"/>
</dbReference>
<dbReference type="GO" id="GO:0090575">
    <property type="term" value="C:RNA polymerase II transcription regulator complex"/>
    <property type="evidence" value="ECO:0000266"/>
    <property type="project" value="RGD"/>
</dbReference>
<dbReference type="GO" id="GO:0019899">
    <property type="term" value="F:enzyme binding"/>
    <property type="evidence" value="ECO:0000266"/>
    <property type="project" value="RGD"/>
</dbReference>
<dbReference type="GO" id="GO:0005540">
    <property type="term" value="F:hyaluronic acid binding"/>
    <property type="evidence" value="ECO:0000250"/>
    <property type="project" value="UniProtKB"/>
</dbReference>
<dbReference type="GO" id="GO:0033906">
    <property type="term" value="F:hyaluronoglucuronidase activity"/>
    <property type="evidence" value="ECO:0000314"/>
    <property type="project" value="UniProtKB"/>
</dbReference>
<dbReference type="GO" id="GO:0004415">
    <property type="term" value="F:hyalurononglucosaminidase activity"/>
    <property type="evidence" value="ECO:0000250"/>
    <property type="project" value="UniProtKB"/>
</dbReference>
<dbReference type="GO" id="GO:0030294">
    <property type="term" value="F:receptor signaling protein tyrosine kinase inhibitor activity"/>
    <property type="evidence" value="ECO:0000250"/>
    <property type="project" value="UniProtKB"/>
</dbReference>
<dbReference type="GO" id="GO:0030971">
    <property type="term" value="F:receptor tyrosine kinase binding"/>
    <property type="evidence" value="ECO:0000266"/>
    <property type="project" value="RGD"/>
</dbReference>
<dbReference type="GO" id="GO:0050431">
    <property type="term" value="F:transforming growth factor beta binding"/>
    <property type="evidence" value="ECO:0000266"/>
    <property type="project" value="RGD"/>
</dbReference>
<dbReference type="GO" id="GO:0001618">
    <property type="term" value="F:virus receptor activity"/>
    <property type="evidence" value="ECO:0000250"/>
    <property type="project" value="UniProtKB"/>
</dbReference>
<dbReference type="GO" id="GO:0005975">
    <property type="term" value="P:carbohydrate metabolic process"/>
    <property type="evidence" value="ECO:0007669"/>
    <property type="project" value="InterPro"/>
</dbReference>
<dbReference type="GO" id="GO:0051216">
    <property type="term" value="P:cartilage development"/>
    <property type="evidence" value="ECO:0000250"/>
    <property type="project" value="UniProtKB"/>
</dbReference>
<dbReference type="GO" id="GO:0044344">
    <property type="term" value="P:cellular response to fibroblast growth factor stimulus"/>
    <property type="evidence" value="ECO:0000250"/>
    <property type="project" value="UniProtKB"/>
</dbReference>
<dbReference type="GO" id="GO:0071347">
    <property type="term" value="P:cellular response to interleukin-1"/>
    <property type="evidence" value="ECO:0000250"/>
    <property type="project" value="UniProtKB"/>
</dbReference>
<dbReference type="GO" id="GO:0071560">
    <property type="term" value="P:cellular response to transforming growth factor beta stimulus"/>
    <property type="evidence" value="ECO:0000250"/>
    <property type="project" value="UniProtKB"/>
</dbReference>
<dbReference type="GO" id="GO:0071356">
    <property type="term" value="P:cellular response to tumor necrosis factor"/>
    <property type="evidence" value="ECO:0000266"/>
    <property type="project" value="RGD"/>
</dbReference>
<dbReference type="GO" id="GO:0071493">
    <property type="term" value="P:cellular response to UV-B"/>
    <property type="evidence" value="ECO:0000250"/>
    <property type="project" value="UniProtKB"/>
</dbReference>
<dbReference type="GO" id="GO:0051607">
    <property type="term" value="P:defense response to virus"/>
    <property type="evidence" value="ECO:0000266"/>
    <property type="project" value="RGD"/>
</dbReference>
<dbReference type="GO" id="GO:0006027">
    <property type="term" value="P:glycosaminoglycan catabolic process"/>
    <property type="evidence" value="ECO:0000250"/>
    <property type="project" value="UniProtKB"/>
</dbReference>
<dbReference type="GO" id="GO:0002244">
    <property type="term" value="P:hematopoietic progenitor cell differentiation"/>
    <property type="evidence" value="ECO:0000266"/>
    <property type="project" value="RGD"/>
</dbReference>
<dbReference type="GO" id="GO:0030214">
    <property type="term" value="P:hyaluronan catabolic process"/>
    <property type="evidence" value="ECO:0000314"/>
    <property type="project" value="UniProtKB"/>
</dbReference>
<dbReference type="GO" id="GO:0001822">
    <property type="term" value="P:kidney development"/>
    <property type="evidence" value="ECO:0000270"/>
    <property type="project" value="UniProtKB"/>
</dbReference>
<dbReference type="GO" id="GO:0042117">
    <property type="term" value="P:monocyte activation"/>
    <property type="evidence" value="ECO:0000250"/>
    <property type="project" value="UniProtKB"/>
</dbReference>
<dbReference type="GO" id="GO:0060586">
    <property type="term" value="P:multicellular organismal-level iron ion homeostasis"/>
    <property type="evidence" value="ECO:0000266"/>
    <property type="project" value="RGD"/>
</dbReference>
<dbReference type="GO" id="GO:0030308">
    <property type="term" value="P:negative regulation of cell growth"/>
    <property type="evidence" value="ECO:0000250"/>
    <property type="project" value="UniProtKB"/>
</dbReference>
<dbReference type="GO" id="GO:0010764">
    <property type="term" value="P:negative regulation of fibroblast migration"/>
    <property type="evidence" value="ECO:0000250"/>
    <property type="project" value="UniProtKB"/>
</dbReference>
<dbReference type="GO" id="GO:0051898">
    <property type="term" value="P:negative regulation of phosphatidylinositol 3-kinase/protein kinase B signal transduction"/>
    <property type="evidence" value="ECO:0000250"/>
    <property type="project" value="UniProtKB"/>
</dbReference>
<dbReference type="GO" id="GO:2001238">
    <property type="term" value="P:positive regulation of extrinsic apoptotic signaling pathway"/>
    <property type="evidence" value="ECO:0000266"/>
    <property type="project" value="RGD"/>
</dbReference>
<dbReference type="GO" id="GO:0050729">
    <property type="term" value="P:positive regulation of inflammatory response"/>
    <property type="evidence" value="ECO:0000250"/>
    <property type="project" value="UniProtKB"/>
</dbReference>
<dbReference type="GO" id="GO:0032755">
    <property type="term" value="P:positive regulation of interleukin-6 production"/>
    <property type="evidence" value="ECO:0000250"/>
    <property type="project" value="UniProtKB"/>
</dbReference>
<dbReference type="GO" id="GO:0032757">
    <property type="term" value="P:positive regulation of interleukin-8 production"/>
    <property type="evidence" value="ECO:0000250"/>
    <property type="project" value="UniProtKB"/>
</dbReference>
<dbReference type="GO" id="GO:0042307">
    <property type="term" value="P:positive regulation of protein import into nucleus"/>
    <property type="evidence" value="ECO:0000266"/>
    <property type="project" value="RGD"/>
</dbReference>
<dbReference type="GO" id="GO:0045944">
    <property type="term" value="P:positive regulation of transcription by RNA polymerase II"/>
    <property type="evidence" value="ECO:0000266"/>
    <property type="project" value="RGD"/>
</dbReference>
<dbReference type="GO" id="GO:0035810">
    <property type="term" value="P:positive regulation of urine volume"/>
    <property type="evidence" value="ECO:0000270"/>
    <property type="project" value="UniProtKB"/>
</dbReference>
<dbReference type="GO" id="GO:0070295">
    <property type="term" value="P:renal water absorption"/>
    <property type="evidence" value="ECO:0000270"/>
    <property type="project" value="UniProtKB"/>
</dbReference>
<dbReference type="GO" id="GO:0046677">
    <property type="term" value="P:response to antibiotic"/>
    <property type="evidence" value="ECO:0000266"/>
    <property type="project" value="RGD"/>
</dbReference>
<dbReference type="GO" id="GO:0000302">
    <property type="term" value="P:response to reactive oxygen species"/>
    <property type="evidence" value="ECO:0000250"/>
    <property type="project" value="UniProtKB"/>
</dbReference>
<dbReference type="GO" id="GO:0009615">
    <property type="term" value="P:response to virus"/>
    <property type="evidence" value="ECO:0000250"/>
    <property type="project" value="UniProtKB"/>
</dbReference>
<dbReference type="GO" id="GO:0048705">
    <property type="term" value="P:skeletal system morphogenesis"/>
    <property type="evidence" value="ECO:0000266"/>
    <property type="project" value="RGD"/>
</dbReference>
<dbReference type="GO" id="GO:0046718">
    <property type="term" value="P:symbiont entry into host cell"/>
    <property type="evidence" value="ECO:0000314"/>
    <property type="project" value="RGD"/>
</dbReference>
<dbReference type="FunFam" id="3.20.20.70:FF:000065">
    <property type="entry name" value="Hyaluronidase"/>
    <property type="match status" value="1"/>
</dbReference>
<dbReference type="Gene3D" id="3.20.20.70">
    <property type="entry name" value="Aldolase class I"/>
    <property type="match status" value="1"/>
</dbReference>
<dbReference type="InterPro" id="IPR013785">
    <property type="entry name" value="Aldolase_TIM"/>
</dbReference>
<dbReference type="InterPro" id="IPR017853">
    <property type="entry name" value="Glycoside_hydrolase_SF"/>
</dbReference>
<dbReference type="InterPro" id="IPR018155">
    <property type="entry name" value="Hyaluronidase"/>
</dbReference>
<dbReference type="PANTHER" id="PTHR11769">
    <property type="entry name" value="HYALURONIDASE"/>
    <property type="match status" value="1"/>
</dbReference>
<dbReference type="PANTHER" id="PTHR11769:SF6">
    <property type="entry name" value="HYALURONIDASE-2"/>
    <property type="match status" value="1"/>
</dbReference>
<dbReference type="Pfam" id="PF01630">
    <property type="entry name" value="Glyco_hydro_56"/>
    <property type="match status" value="1"/>
</dbReference>
<dbReference type="PIRSF" id="PIRSF038193">
    <property type="entry name" value="Hyaluronidase"/>
    <property type="match status" value="1"/>
</dbReference>
<dbReference type="PRINTS" id="PR00846">
    <property type="entry name" value="GLHYDRLASE56"/>
</dbReference>
<dbReference type="SUPFAM" id="SSF51445">
    <property type="entry name" value="(Trans)glycosidases"/>
    <property type="match status" value="1"/>
</dbReference>
<dbReference type="PROSITE" id="PS00022">
    <property type="entry name" value="EGF_1"/>
    <property type="match status" value="1"/>
</dbReference>
<dbReference type="PROSITE" id="PS01186">
    <property type="entry name" value="EGF_2"/>
    <property type="match status" value="1"/>
</dbReference>
<proteinExistence type="evidence at transcript level"/>
<feature type="signal peptide" evidence="4">
    <location>
        <begin position="1"/>
        <end position="20"/>
    </location>
</feature>
<feature type="chain" id="PRO_0000012103" description="Hyaluronidase-2">
    <location>
        <begin position="21"/>
        <end position="448"/>
    </location>
</feature>
<feature type="propeptide" id="PRO_0000012104" description="Removed in mature form" evidence="4">
    <location>
        <begin position="449"/>
        <end position="473"/>
    </location>
</feature>
<feature type="domain" description="EGF-like">
    <location>
        <begin position="361"/>
        <end position="439"/>
    </location>
</feature>
<feature type="active site" description="Proton donor" evidence="1">
    <location>
        <position position="135"/>
    </location>
</feature>
<feature type="lipid moiety-binding region" description="GPI-anchor amidated aspartate" evidence="4">
    <location>
        <position position="448"/>
    </location>
</feature>
<feature type="glycosylation site" description="N-linked (GlcNAc...) asparagine" evidence="4">
    <location>
        <position position="74"/>
    </location>
</feature>
<feature type="glycosylation site" description="N-linked (GlcNAc...) asparagine" evidence="4">
    <location>
        <position position="103"/>
    </location>
</feature>
<feature type="glycosylation site" description="N-linked (GlcNAc...) asparagine" evidence="4">
    <location>
        <position position="357"/>
    </location>
</feature>
<feature type="disulfide bond" evidence="1">
    <location>
        <begin position="47"/>
        <end position="340"/>
    </location>
</feature>
<feature type="disulfide bond" evidence="1">
    <location>
        <begin position="211"/>
        <end position="227"/>
    </location>
</feature>
<feature type="disulfide bond" evidence="1">
    <location>
        <begin position="365"/>
        <end position="376"/>
    </location>
</feature>
<feature type="disulfide bond" evidence="1">
    <location>
        <begin position="370"/>
        <end position="427"/>
    </location>
</feature>
<feature type="disulfide bond" evidence="1">
    <location>
        <begin position="429"/>
        <end position="438"/>
    </location>
</feature>
<reference key="1">
    <citation type="submission" date="1997-11" db="EMBL/GenBank/DDBJ databases">
        <title>Cloning and expression of the cDNA for a rat hyaluronidase.</title>
        <authorList>
            <person name="Boel P."/>
            <person name="Mertens-Strijthagen J."/>
            <person name="Flamion B."/>
        </authorList>
    </citation>
    <scope>NUCLEOTIDE SEQUENCE [MRNA]</scope>
</reference>
<protein>
    <recommendedName>
        <fullName>Hyaluronidase-2</fullName>
        <shortName>Hyal-2</shortName>
        <ecNumber>3.2.1.35</ecNumber>
    </recommendedName>
    <alternativeName>
        <fullName>Hyaluronoglucosaminidase-2</fullName>
    </alternativeName>
</protein>
<evidence type="ECO:0000250" key="1"/>
<evidence type="ECO:0000250" key="2">
    <source>
        <dbReference type="UniProtKB" id="O35632"/>
    </source>
</evidence>
<evidence type="ECO:0000250" key="3">
    <source>
        <dbReference type="UniProtKB" id="Q12891"/>
    </source>
</evidence>
<evidence type="ECO:0000255" key="4"/>
<evidence type="ECO:0000305" key="5"/>
<gene>
    <name type="primary">Hyal2</name>
</gene>
<comment type="function">
    <text evidence="2">Catalyzes hyaluronan degradation into small fragments that are endocytosed and degraded in lysosomes by HYAL1 and exoglycosidases. Essential for the breakdown of extracellular matrix hyaluronan.</text>
</comment>
<comment type="catalytic activity">
    <reaction>
        <text>Random hydrolysis of (1-&gt;4)-linkages between N-acetyl-beta-D-glucosamine and D-glucuronate residues in hyaluronate.</text>
        <dbReference type="EC" id="3.2.1.35"/>
    </reaction>
</comment>
<comment type="subunit">
    <text evidence="3">Interacts with MST1R.</text>
</comment>
<comment type="subcellular location">
    <subcellularLocation>
        <location evidence="3">Cell membrane</location>
        <topology evidence="3">Lipid-anchor</topology>
        <topology evidence="3">GPI-anchor</topology>
    </subcellularLocation>
</comment>
<comment type="similarity">
    <text evidence="5">Belongs to the glycosyl hydrolase 56 family.</text>
</comment>
<name>HYAL2_RAT</name>
<keyword id="KW-1003">Cell membrane</keyword>
<keyword id="KW-1015">Disulfide bond</keyword>
<keyword id="KW-0245">EGF-like domain</keyword>
<keyword id="KW-0325">Glycoprotein</keyword>
<keyword id="KW-0326">Glycosidase</keyword>
<keyword id="KW-0336">GPI-anchor</keyword>
<keyword id="KW-0378">Hydrolase</keyword>
<keyword id="KW-0449">Lipoprotein</keyword>
<keyword id="KW-0472">Membrane</keyword>
<keyword id="KW-0675">Receptor</keyword>
<keyword id="KW-1185">Reference proteome</keyword>
<keyword id="KW-0732">Signal</keyword>